<dbReference type="EMBL" id="BA000017">
    <property type="protein sequence ID" value="BAB56783.2"/>
    <property type="molecule type" value="Genomic_DNA"/>
</dbReference>
<dbReference type="RefSeq" id="WP_000060771.1">
    <property type="nucleotide sequence ID" value="NC_002758.2"/>
</dbReference>
<dbReference type="SMR" id="Q932F5"/>
<dbReference type="KEGG" id="sav:SAV0621"/>
<dbReference type="HOGENOM" id="CLU_007100_2_1_9"/>
<dbReference type="PhylomeDB" id="Q932F5"/>
<dbReference type="Proteomes" id="UP000002481">
    <property type="component" value="Chromosome"/>
</dbReference>
<dbReference type="GO" id="GO:0005886">
    <property type="term" value="C:plasma membrane"/>
    <property type="evidence" value="ECO:0007669"/>
    <property type="project" value="UniProtKB-SubCell"/>
</dbReference>
<dbReference type="GO" id="GO:0015297">
    <property type="term" value="F:antiporter activity"/>
    <property type="evidence" value="ECO:0007669"/>
    <property type="project" value="UniProtKB-KW"/>
</dbReference>
<dbReference type="GO" id="GO:0006811">
    <property type="term" value="P:monoatomic ion transport"/>
    <property type="evidence" value="ECO:0007669"/>
    <property type="project" value="UniProtKB-KW"/>
</dbReference>
<dbReference type="InterPro" id="IPR050616">
    <property type="entry name" value="CPA3_Na-H_Antiporter_A"/>
</dbReference>
<dbReference type="InterPro" id="IPR025383">
    <property type="entry name" value="MrpA_C/MbhD"/>
</dbReference>
<dbReference type="InterPro" id="IPR046806">
    <property type="entry name" value="MrpA_C/MbhE"/>
</dbReference>
<dbReference type="InterPro" id="IPR001750">
    <property type="entry name" value="ND/Mrp_TM"/>
</dbReference>
<dbReference type="InterPro" id="IPR001516">
    <property type="entry name" value="Proton_antipo_N"/>
</dbReference>
<dbReference type="NCBIfam" id="NF009286">
    <property type="entry name" value="PRK12646.1"/>
    <property type="match status" value="1"/>
</dbReference>
<dbReference type="PANTHER" id="PTHR43373">
    <property type="entry name" value="NA(+)/H(+) ANTIPORTER SUBUNIT"/>
    <property type="match status" value="1"/>
</dbReference>
<dbReference type="PANTHER" id="PTHR43373:SF1">
    <property type="entry name" value="NA(+)_H(+) ANTIPORTER SUBUNIT A"/>
    <property type="match status" value="1"/>
</dbReference>
<dbReference type="Pfam" id="PF13244">
    <property type="entry name" value="MbhD"/>
    <property type="match status" value="1"/>
</dbReference>
<dbReference type="Pfam" id="PF20501">
    <property type="entry name" value="MbhE"/>
    <property type="match status" value="1"/>
</dbReference>
<dbReference type="Pfam" id="PF00361">
    <property type="entry name" value="Proton_antipo_M"/>
    <property type="match status" value="1"/>
</dbReference>
<dbReference type="Pfam" id="PF00662">
    <property type="entry name" value="Proton_antipo_N"/>
    <property type="match status" value="1"/>
</dbReference>
<dbReference type="PRINTS" id="PR01434">
    <property type="entry name" value="NADHDHGNASE5"/>
</dbReference>
<name>MNHA2_STAAM</name>
<evidence type="ECO:0000250" key="1"/>
<evidence type="ECO:0000255" key="2"/>
<evidence type="ECO:0000305" key="3"/>
<gene>
    <name type="primary">mnhA2</name>
    <name type="synonym">mrpA2</name>
    <name type="ordered locus">SAV0621</name>
</gene>
<feature type="chain" id="PRO_0000372291" description="Putative antiporter subunit mnhA2">
    <location>
        <begin position="1"/>
        <end position="800"/>
    </location>
</feature>
<feature type="transmembrane region" description="Helical" evidence="2">
    <location>
        <begin position="1"/>
        <end position="21"/>
    </location>
</feature>
<feature type="transmembrane region" description="Helical" evidence="2">
    <location>
        <begin position="33"/>
        <end position="53"/>
    </location>
</feature>
<feature type="transmembrane region" description="Helical" evidence="2">
    <location>
        <begin position="78"/>
        <end position="98"/>
    </location>
</feature>
<feature type="transmembrane region" description="Helical" evidence="2">
    <location>
        <begin position="118"/>
        <end position="138"/>
    </location>
</feature>
<feature type="transmembrane region" description="Helical" evidence="2">
    <location>
        <begin position="167"/>
        <end position="187"/>
    </location>
</feature>
<feature type="transmembrane region" description="Helical" evidence="2">
    <location>
        <begin position="207"/>
        <end position="227"/>
    </location>
</feature>
<feature type="transmembrane region" description="Helical" evidence="2">
    <location>
        <begin position="241"/>
        <end position="261"/>
    </location>
</feature>
<feature type="transmembrane region" description="Helical" evidence="2">
    <location>
        <begin position="273"/>
        <end position="293"/>
    </location>
</feature>
<feature type="transmembrane region" description="Helical" evidence="2">
    <location>
        <begin position="300"/>
        <end position="320"/>
    </location>
</feature>
<feature type="transmembrane region" description="Helical" evidence="2">
    <location>
        <begin position="331"/>
        <end position="351"/>
    </location>
</feature>
<feature type="transmembrane region" description="Helical" evidence="2">
    <location>
        <begin position="387"/>
        <end position="407"/>
    </location>
</feature>
<feature type="transmembrane region" description="Helical" evidence="2">
    <location>
        <begin position="424"/>
        <end position="444"/>
    </location>
</feature>
<feature type="transmembrane region" description="Helical" evidence="2">
    <location>
        <begin position="472"/>
        <end position="492"/>
    </location>
</feature>
<feature type="transmembrane region" description="Helical" evidence="2">
    <location>
        <begin position="527"/>
        <end position="547"/>
    </location>
</feature>
<feature type="transmembrane region" description="Helical" evidence="2">
    <location>
        <begin position="595"/>
        <end position="615"/>
    </location>
</feature>
<feature type="transmembrane region" description="Helical" evidence="2">
    <location>
        <begin position="627"/>
        <end position="647"/>
    </location>
</feature>
<feature type="transmembrane region" description="Helical" evidence="2">
    <location>
        <begin position="651"/>
        <end position="671"/>
    </location>
</feature>
<feature type="transmembrane region" description="Helical" evidence="2">
    <location>
        <begin position="676"/>
        <end position="696"/>
    </location>
</feature>
<feature type="transmembrane region" description="Helical" evidence="2">
    <location>
        <begin position="712"/>
        <end position="732"/>
    </location>
</feature>
<feature type="transmembrane region" description="Helical" evidence="2">
    <location>
        <begin position="768"/>
        <end position="788"/>
    </location>
</feature>
<protein>
    <recommendedName>
        <fullName>Putative antiporter subunit mnhA2</fullName>
    </recommendedName>
    <alternativeName>
        <fullName>Mrp complex subunit A2</fullName>
    </alternativeName>
    <alternativeName>
        <fullName>Putative NADH-ubiquinone oxidoreductase subunit mnhA2</fullName>
    </alternativeName>
</protein>
<sequence>MSLVYLLIAILVIMAMILLMSKRRALAKYAGYIALVAPVISSIYFLIQIPSVAKLQYLSTSIPWIKTLDINLDLRLDGLSLMFSLIISLIGIAVFFYATQYLSSRKDNLPRFYFYLTLFMFSMIGIVLSDNTILMYIFWELTSVSSFLLISYWYNNGDSQFGAIQSFMITVFGGLALLVGFIMLYIMTGTNNITDILGQADHIKNHGLFIPMIFMFLLGAFTKSAQFPFHIWLPRAMAAPTPVSAYLHSATMVKAGIFLLLRFTPLLGLSNMYIYIVTFVGLITMLFGSITALKQWDLKGILAYSTISQLGMIMAMVGIGGGYAQHQQDAIASIYVFVLFGALFHLMNHAIFKCALFMGVGILDHEAGSRDIRILSGMRQLFPKMNLVMTIAALSMAGVPFLNGFLSKEMFLDALTQTGQLSQFSLISMIAIVFVGVIASIFTFTYALYMVKEVFWTKYDSKVFTKKNIHEPWLFSLPSLILMVLVPVIFFVPNIFGKGIIVPALRGVSGGNHQIDPLAPHVSQWHGFNIPLLLTIIIILLGSVLAIKVDWKKVFTGKIRQISVSKGYEMVYRHFEKFATKRFKRVMQDRLNQYIIMTLGIFMIIIGYGYIRIGLPKVHQLHVSEFGALEIILAIVTVTIGISLIFIRQRLTMVILNGVIGFVVTLFFIAMKAPDLALTQLVVETITTILFIVSFSRLPNVPRSNANKKREIIKISVSLLMALIVVSLIFITQQTDGLSSISDFYLKADKLTGGKNIVNAILGDFRALDTLFEGLVLIITGLGIYTLLNYQDRRGQDERE</sequence>
<accession>Q932F5</accession>
<reference key="1">
    <citation type="journal article" date="2001" name="Lancet">
        <title>Whole genome sequencing of meticillin-resistant Staphylococcus aureus.</title>
        <authorList>
            <person name="Kuroda M."/>
            <person name="Ohta T."/>
            <person name="Uchiyama I."/>
            <person name="Baba T."/>
            <person name="Yuzawa H."/>
            <person name="Kobayashi I."/>
            <person name="Cui L."/>
            <person name="Oguchi A."/>
            <person name="Aoki K."/>
            <person name="Nagai Y."/>
            <person name="Lian J.-Q."/>
            <person name="Ito T."/>
            <person name="Kanamori M."/>
            <person name="Matsumaru H."/>
            <person name="Maruyama A."/>
            <person name="Murakami H."/>
            <person name="Hosoyama A."/>
            <person name="Mizutani-Ui Y."/>
            <person name="Takahashi N.K."/>
            <person name="Sawano T."/>
            <person name="Inoue R."/>
            <person name="Kaito C."/>
            <person name="Sekimizu K."/>
            <person name="Hirakawa H."/>
            <person name="Kuhara S."/>
            <person name="Goto S."/>
            <person name="Yabuzaki J."/>
            <person name="Kanehisa M."/>
            <person name="Yamashita A."/>
            <person name="Oshima K."/>
            <person name="Furuya K."/>
            <person name="Yoshino C."/>
            <person name="Shiba T."/>
            <person name="Hattori M."/>
            <person name="Ogasawara N."/>
            <person name="Hayashi H."/>
            <person name="Hiramatsu K."/>
        </authorList>
    </citation>
    <scope>NUCLEOTIDE SEQUENCE [LARGE SCALE GENOMIC DNA]</scope>
    <source>
        <strain>Mu50 / ATCC 700699</strain>
    </source>
</reference>
<comment type="subunit">
    <text evidence="1">May form a heterooligomeric complex that consists of seven subunits: mnhA2, mnhB2, mnhC2, mnhD2, mnhE2, mnhF2 and mnhG2.</text>
</comment>
<comment type="subcellular location">
    <subcellularLocation>
        <location evidence="3">Cell membrane</location>
        <topology evidence="3">Multi-pass membrane protein</topology>
    </subcellularLocation>
</comment>
<comment type="similarity">
    <text evidence="3">Belongs to the CPA3 antiporters (TC 2.A.63) subunit A family.</text>
</comment>
<proteinExistence type="inferred from homology"/>
<organism>
    <name type="scientific">Staphylococcus aureus (strain Mu50 / ATCC 700699)</name>
    <dbReference type="NCBI Taxonomy" id="158878"/>
    <lineage>
        <taxon>Bacteria</taxon>
        <taxon>Bacillati</taxon>
        <taxon>Bacillota</taxon>
        <taxon>Bacilli</taxon>
        <taxon>Bacillales</taxon>
        <taxon>Staphylococcaceae</taxon>
        <taxon>Staphylococcus</taxon>
    </lineage>
</organism>
<keyword id="KW-0050">Antiport</keyword>
<keyword id="KW-1003">Cell membrane</keyword>
<keyword id="KW-0406">Ion transport</keyword>
<keyword id="KW-0472">Membrane</keyword>
<keyword id="KW-0812">Transmembrane</keyword>
<keyword id="KW-1133">Transmembrane helix</keyword>
<keyword id="KW-0813">Transport</keyword>